<gene>
    <name evidence="1" type="primary">prpE</name>
    <name type="ordered locus">BCE_1324</name>
</gene>
<dbReference type="EC" id="3.6.1.17" evidence="1"/>
<dbReference type="EMBL" id="AE017194">
    <property type="protein sequence ID" value="AAS40253.1"/>
    <property type="molecule type" value="Genomic_DNA"/>
</dbReference>
<dbReference type="SMR" id="Q73BU4"/>
<dbReference type="KEGG" id="bca:BCE_1324"/>
<dbReference type="HOGENOM" id="CLU_023125_3_0_9"/>
<dbReference type="Proteomes" id="UP000002527">
    <property type="component" value="Chromosome"/>
</dbReference>
<dbReference type="GO" id="GO:0005737">
    <property type="term" value="C:cytoplasm"/>
    <property type="evidence" value="ECO:0007669"/>
    <property type="project" value="TreeGrafter"/>
</dbReference>
<dbReference type="GO" id="GO:0004081">
    <property type="term" value="F:bis(5'-nucleosyl)-tetraphosphatase (asymmetrical) activity"/>
    <property type="evidence" value="ECO:0007669"/>
    <property type="project" value="UniProtKB-UniRule"/>
</dbReference>
<dbReference type="GO" id="GO:0005525">
    <property type="term" value="F:GTP binding"/>
    <property type="evidence" value="ECO:0007669"/>
    <property type="project" value="UniProtKB-KW"/>
</dbReference>
<dbReference type="GO" id="GO:0016151">
    <property type="term" value="F:nickel cation binding"/>
    <property type="evidence" value="ECO:0007669"/>
    <property type="project" value="UniProtKB-UniRule"/>
</dbReference>
<dbReference type="GO" id="GO:0016791">
    <property type="term" value="F:phosphatase activity"/>
    <property type="evidence" value="ECO:0007669"/>
    <property type="project" value="TreeGrafter"/>
</dbReference>
<dbReference type="CDD" id="cd07423">
    <property type="entry name" value="MPP_Prp_like"/>
    <property type="match status" value="1"/>
</dbReference>
<dbReference type="Gene3D" id="3.60.21.10">
    <property type="match status" value="1"/>
</dbReference>
<dbReference type="HAMAP" id="MF_01443">
    <property type="entry name" value="PrpE"/>
    <property type="match status" value="1"/>
</dbReference>
<dbReference type="InterPro" id="IPR050126">
    <property type="entry name" value="Ap4A_hydrolase"/>
</dbReference>
<dbReference type="InterPro" id="IPR023937">
    <property type="entry name" value="Bis(5'-nucleosyl)-tetraP_PrpE"/>
</dbReference>
<dbReference type="InterPro" id="IPR004843">
    <property type="entry name" value="Calcineurin-like_PHP_ApaH"/>
</dbReference>
<dbReference type="InterPro" id="IPR029052">
    <property type="entry name" value="Metallo-depent_PP-like"/>
</dbReference>
<dbReference type="InterPro" id="IPR041780">
    <property type="entry name" value="MPP_PrpE-like"/>
</dbReference>
<dbReference type="NCBIfam" id="NF010148">
    <property type="entry name" value="PRK13625.1"/>
    <property type="match status" value="1"/>
</dbReference>
<dbReference type="PANTHER" id="PTHR42850:SF7">
    <property type="entry name" value="BIS(5'-NUCLEOSYL)-TETRAPHOSPHATASE PRPE [ASYMMETRICAL]"/>
    <property type="match status" value="1"/>
</dbReference>
<dbReference type="PANTHER" id="PTHR42850">
    <property type="entry name" value="METALLOPHOSPHOESTERASE"/>
    <property type="match status" value="1"/>
</dbReference>
<dbReference type="Pfam" id="PF00149">
    <property type="entry name" value="Metallophos"/>
    <property type="match status" value="1"/>
</dbReference>
<dbReference type="SUPFAM" id="SSF56300">
    <property type="entry name" value="Metallo-dependent phosphatases"/>
    <property type="match status" value="1"/>
</dbReference>
<feature type="chain" id="PRO_0000297696" description="Bis(5'-nucleosyl)-tetraphosphatase PrpE [asymmetrical]">
    <location>
        <begin position="1"/>
        <end position="246"/>
    </location>
</feature>
<comment type="function">
    <text evidence="1">Asymmetrically hydrolyzes Ap4p to yield AMP and ATP.</text>
</comment>
<comment type="catalytic activity">
    <reaction evidence="1">
        <text>P(1),P(4)-bis(5'-guanosyl) tetraphosphate + H2O = GMP + GTP + 2 H(+)</text>
        <dbReference type="Rhea" id="RHEA:22484"/>
        <dbReference type="ChEBI" id="CHEBI:15377"/>
        <dbReference type="ChEBI" id="CHEBI:15378"/>
        <dbReference type="ChEBI" id="CHEBI:37565"/>
        <dbReference type="ChEBI" id="CHEBI:57553"/>
        <dbReference type="ChEBI" id="CHEBI:58115"/>
        <dbReference type="EC" id="3.6.1.17"/>
    </reaction>
</comment>
<comment type="cofactor">
    <cofactor evidence="1">
        <name>Ni(2+)</name>
        <dbReference type="ChEBI" id="CHEBI:49786"/>
    </cofactor>
</comment>
<comment type="similarity">
    <text evidence="1">Belongs to the PrpE family.</text>
</comment>
<sequence>MKYDIIGDIHGCFQEFQDLTKKLGYNWNSDLPIHPDQRKLAFVGDITDRGPHSLRMIEIVWELVINKKVAYYAPGNHCNKLYRFFLGRNVTIAHGLETTVAEYEALPSHQQNMIKEKFITLYEQSPLYHVLDEKRLIVCHAGIRQDYIGRQDKKVQTFVLYGDITGEKHADGSPVRRDWAKEYKGTAWVVYGHTPVKEPRFVNHTVNIDTGAVFGGKLTGLRYPEMETVSVPSSLPFVPEKFRPIS</sequence>
<organism>
    <name type="scientific">Bacillus cereus (strain ATCC 10987 / NRS 248)</name>
    <dbReference type="NCBI Taxonomy" id="222523"/>
    <lineage>
        <taxon>Bacteria</taxon>
        <taxon>Bacillati</taxon>
        <taxon>Bacillota</taxon>
        <taxon>Bacilli</taxon>
        <taxon>Bacillales</taxon>
        <taxon>Bacillaceae</taxon>
        <taxon>Bacillus</taxon>
        <taxon>Bacillus cereus group</taxon>
    </lineage>
</organism>
<proteinExistence type="inferred from homology"/>
<protein>
    <recommendedName>
        <fullName evidence="1">Bis(5'-nucleosyl)-tetraphosphatase PrpE [asymmetrical]</fullName>
        <ecNumber evidence="1">3.6.1.17</ecNumber>
    </recommendedName>
    <alternativeName>
        <fullName evidence="1">Ap4A hydrolase</fullName>
    </alternativeName>
    <alternativeName>
        <fullName evidence="1">Diadenosine 5',5'''-P1,P4-tetraphosphate asymmetrical hydrolase</fullName>
        <shortName evidence="1">Diadenosine tetraphosphatase</shortName>
    </alternativeName>
</protein>
<name>PRPE_BACC1</name>
<accession>Q73BU4</accession>
<keyword id="KW-0342">GTP-binding</keyword>
<keyword id="KW-0378">Hydrolase</keyword>
<keyword id="KW-0533">Nickel</keyword>
<keyword id="KW-0547">Nucleotide-binding</keyword>
<evidence type="ECO:0000255" key="1">
    <source>
        <dbReference type="HAMAP-Rule" id="MF_01443"/>
    </source>
</evidence>
<reference key="1">
    <citation type="journal article" date="2004" name="Nucleic Acids Res.">
        <title>The genome sequence of Bacillus cereus ATCC 10987 reveals metabolic adaptations and a large plasmid related to Bacillus anthracis pXO1.</title>
        <authorList>
            <person name="Rasko D.A."/>
            <person name="Ravel J."/>
            <person name="Oekstad O.A."/>
            <person name="Helgason E."/>
            <person name="Cer R.Z."/>
            <person name="Jiang L."/>
            <person name="Shores K.A."/>
            <person name="Fouts D.E."/>
            <person name="Tourasse N.J."/>
            <person name="Angiuoli S.V."/>
            <person name="Kolonay J.F."/>
            <person name="Nelson W.C."/>
            <person name="Kolstoe A.-B."/>
            <person name="Fraser C.M."/>
            <person name="Read T.D."/>
        </authorList>
    </citation>
    <scope>NUCLEOTIDE SEQUENCE [LARGE SCALE GENOMIC DNA]</scope>
    <source>
        <strain>ATCC 10987 / NRS 248</strain>
    </source>
</reference>